<proteinExistence type="evidence at transcript level"/>
<comment type="function">
    <text evidence="1">Catalyzes the first oxidative step of the phenylpropanoid pathway in higher plants by transforming trans-cinnamate into p-coumarate (By similarity). The compounds formed by this pathway are essential components for lignification, pollination, and defense against ultraviolet light, predators and pathogens (By similarity).</text>
</comment>
<comment type="catalytic activity">
    <reaction evidence="1">
        <text>(E)-cinnamate + reduced [NADPH--hemoprotein reductase] + O2 = (E)-4-coumarate + oxidized [NADPH--hemoprotein reductase] + H2O + H(+)</text>
        <dbReference type="Rhea" id="RHEA:10608"/>
        <dbReference type="Rhea" id="RHEA-COMP:11964"/>
        <dbReference type="Rhea" id="RHEA-COMP:11965"/>
        <dbReference type="ChEBI" id="CHEBI:12876"/>
        <dbReference type="ChEBI" id="CHEBI:15377"/>
        <dbReference type="ChEBI" id="CHEBI:15378"/>
        <dbReference type="ChEBI" id="CHEBI:15379"/>
        <dbReference type="ChEBI" id="CHEBI:15669"/>
        <dbReference type="ChEBI" id="CHEBI:57618"/>
        <dbReference type="ChEBI" id="CHEBI:58210"/>
        <dbReference type="EC" id="1.14.14.91"/>
    </reaction>
</comment>
<comment type="cofactor">
    <cofactor evidence="2">
        <name>heme</name>
        <dbReference type="ChEBI" id="CHEBI:30413"/>
    </cofactor>
</comment>
<comment type="pathway">
    <text evidence="4">Phenylpropanoid metabolism; trans-4-coumarate biosynthesis; trans-4-coumarate from trans-cinnamate: step 1/1.</text>
</comment>
<comment type="subcellular location">
    <subcellularLocation>
        <location evidence="3">Membrane</location>
        <topology evidence="3">Single-pass membrane protein</topology>
    </subcellularLocation>
</comment>
<comment type="induction">
    <text>By fungal elicitor.</text>
</comment>
<comment type="similarity">
    <text evidence="4">Belongs to the cytochrome P450 family.</text>
</comment>
<accession>Q42797</accession>
<evidence type="ECO:0000250" key="1">
    <source>
        <dbReference type="UniProtKB" id="Q04468"/>
    </source>
</evidence>
<evidence type="ECO:0000250" key="2">
    <source>
        <dbReference type="UniProtKB" id="Q94IP1"/>
    </source>
</evidence>
<evidence type="ECO:0000255" key="3"/>
<evidence type="ECO:0000305" key="4"/>
<dbReference type="EC" id="1.14.14.91" evidence="1"/>
<dbReference type="EMBL" id="X92437">
    <property type="protein sequence ID" value="CAA63172.1"/>
    <property type="molecule type" value="mRNA"/>
</dbReference>
<dbReference type="RefSeq" id="NP_001237317.1">
    <property type="nucleotide sequence ID" value="NM_001250388.2"/>
</dbReference>
<dbReference type="SMR" id="Q42797"/>
<dbReference type="FunCoup" id="Q42797">
    <property type="interactions" value="560"/>
</dbReference>
<dbReference type="STRING" id="3847.Q42797"/>
<dbReference type="PaxDb" id="3847-GLYMA02G40290.1"/>
<dbReference type="EnsemblPlants" id="KRH72830">
    <property type="protein sequence ID" value="KRH72830"/>
    <property type="gene ID" value="GLYMA_02G236500"/>
</dbReference>
<dbReference type="GeneID" id="100499623"/>
<dbReference type="Gramene" id="KRH72830">
    <property type="protein sequence ID" value="KRH72830"/>
    <property type="gene ID" value="GLYMA_02G236500"/>
</dbReference>
<dbReference type="KEGG" id="gmx:100499623"/>
<dbReference type="eggNOG" id="KOG0156">
    <property type="taxonomic scope" value="Eukaryota"/>
</dbReference>
<dbReference type="HOGENOM" id="CLU_001570_4_0_1"/>
<dbReference type="InParanoid" id="Q42797"/>
<dbReference type="OMA" id="DPRAYWQ"/>
<dbReference type="OrthoDB" id="1470350at2759"/>
<dbReference type="UniPathway" id="UPA00825">
    <property type="reaction ID" value="UER00789"/>
</dbReference>
<dbReference type="Proteomes" id="UP000008827">
    <property type="component" value="Chromosome 2"/>
</dbReference>
<dbReference type="GO" id="GO:0016020">
    <property type="term" value="C:membrane"/>
    <property type="evidence" value="ECO:0007669"/>
    <property type="project" value="UniProtKB-SubCell"/>
</dbReference>
<dbReference type="GO" id="GO:0020037">
    <property type="term" value="F:heme binding"/>
    <property type="evidence" value="ECO:0007669"/>
    <property type="project" value="InterPro"/>
</dbReference>
<dbReference type="GO" id="GO:0005506">
    <property type="term" value="F:iron ion binding"/>
    <property type="evidence" value="ECO:0007669"/>
    <property type="project" value="InterPro"/>
</dbReference>
<dbReference type="GO" id="GO:0016710">
    <property type="term" value="F:trans-cinnamate 4-monooxygenase activity"/>
    <property type="evidence" value="ECO:0000318"/>
    <property type="project" value="GO_Central"/>
</dbReference>
<dbReference type="GO" id="GO:0009808">
    <property type="term" value="P:lignin metabolic process"/>
    <property type="evidence" value="ECO:0000318"/>
    <property type="project" value="GO_Central"/>
</dbReference>
<dbReference type="CDD" id="cd11074">
    <property type="entry name" value="CYP73"/>
    <property type="match status" value="1"/>
</dbReference>
<dbReference type="FunFam" id="1.10.630.10:FF:000013">
    <property type="entry name" value="Trans-cinnamate 4-monooxygenase"/>
    <property type="match status" value="1"/>
</dbReference>
<dbReference type="Gene3D" id="1.10.630.10">
    <property type="entry name" value="Cytochrome P450"/>
    <property type="match status" value="1"/>
</dbReference>
<dbReference type="InterPro" id="IPR001128">
    <property type="entry name" value="Cyt_P450"/>
</dbReference>
<dbReference type="InterPro" id="IPR017972">
    <property type="entry name" value="Cyt_P450_CS"/>
</dbReference>
<dbReference type="InterPro" id="IPR002401">
    <property type="entry name" value="Cyt_P450_E_grp-I"/>
</dbReference>
<dbReference type="InterPro" id="IPR036396">
    <property type="entry name" value="Cyt_P450_sf"/>
</dbReference>
<dbReference type="PANTHER" id="PTHR47948">
    <property type="entry name" value="TRANS-CINNAMATE 4-MONOOXYGENASE"/>
    <property type="match status" value="1"/>
</dbReference>
<dbReference type="PANTHER" id="PTHR47948:SF11">
    <property type="entry name" value="TRANS-CINNAMATE 4-MONOOXYGENASE"/>
    <property type="match status" value="1"/>
</dbReference>
<dbReference type="Pfam" id="PF00067">
    <property type="entry name" value="p450"/>
    <property type="match status" value="1"/>
</dbReference>
<dbReference type="PRINTS" id="PR00463">
    <property type="entry name" value="EP450I"/>
</dbReference>
<dbReference type="PRINTS" id="PR00385">
    <property type="entry name" value="P450"/>
</dbReference>
<dbReference type="SUPFAM" id="SSF48264">
    <property type="entry name" value="Cytochrome P450"/>
    <property type="match status" value="1"/>
</dbReference>
<dbReference type="PROSITE" id="PS00086">
    <property type="entry name" value="CYTOCHROME_P450"/>
    <property type="match status" value="1"/>
</dbReference>
<feature type="chain" id="PRO_0000052254" description="Trans-cinnamate 4-monooxygenase">
    <location>
        <begin position="1"/>
        <end position="506"/>
    </location>
</feature>
<feature type="transmembrane region" description="Helical" evidence="3">
    <location>
        <begin position="3"/>
        <end position="23"/>
    </location>
</feature>
<feature type="binding site" evidence="2">
    <location>
        <begin position="213"/>
        <end position="218"/>
    </location>
    <ligand>
        <name>(E)-cinnamate</name>
        <dbReference type="ChEBI" id="CHEBI:15669"/>
    </ligand>
</feature>
<feature type="binding site" evidence="2">
    <location>
        <position position="307"/>
    </location>
    <ligand>
        <name>(E)-cinnamate</name>
        <dbReference type="ChEBI" id="CHEBI:15669"/>
    </ligand>
</feature>
<feature type="binding site" description="axial binding residue" evidence="2">
    <location>
        <position position="448"/>
    </location>
    <ligand>
        <name>heme</name>
        <dbReference type="ChEBI" id="CHEBI:30413"/>
    </ligand>
    <ligandPart>
        <name>Fe</name>
        <dbReference type="ChEBI" id="CHEBI:18248"/>
    </ligandPart>
</feature>
<sequence length="506" mass="58011">MDLLLLEKTLIGLFLAAVVAIAVSTLRGRKFKLPPGPLPVPIFGNWLQVGDDLNHRNLTDLAKKFGDIFLLRMGQRNLVVVSSPELAKEVLHTQGVEFGSRTRNVVFDIFTGKGQDMVFTVYGEHWRKMRRIMTVPFFTNKVVQQYRHGWESEAAAVVEDVKKNPDAAVSGTVIRRRLQLMMYNNMYRIMFDRRFESEEDPIFQRLRALNGERSRLAQSFEYNYGDFIPILRPFLKGYLKICKEVKETRLKLFKDYFVDERKKLGSTKSTNNNNELKCAIDHILDAQRKGEINEDNVLYIVENINVAAIETTLWSIEWGIAELVNHPEIQQKLRDEIDRVLGAGHQVTEPDIQKLPYLQAVVKETLRLRMAIPLLVPHMNLHDAKLGGYDIPAESKILVNAWWLANNPAHWKKPEEFRPERFFEEESLVEANGNDFRYLPFGVGRRSCPGIILALPILGITLGRLVQNFELLPPPGQSQIDTSEKGGQFSLHILKHSTIVAKPRSF</sequence>
<reference key="1">
    <citation type="journal article" date="1998" name="Mol. Gen. Genet.">
        <title>Identification of elicitor-induced cytochrome P450s of soybean (Glycine max L.) using differential display of mRNA.</title>
        <authorList>
            <person name="Schopfer C.R."/>
            <person name="Ebel J."/>
        </authorList>
    </citation>
    <scope>NUCLEOTIDE SEQUENCE [MRNA]</scope>
    <source>
        <strain>cv. Harosoy 63</strain>
    </source>
</reference>
<protein>
    <recommendedName>
        <fullName>Trans-cinnamate 4-monooxygenase</fullName>
        <ecNumber evidence="1">1.14.14.91</ecNumber>
    </recommendedName>
    <alternativeName>
        <fullName>Cinnamic acid 4-hydroxylase</fullName>
        <shortName>C4H</shortName>
        <shortName>CA4H</shortName>
    </alternativeName>
    <alternativeName>
        <fullName>Cytochrome P450 73</fullName>
    </alternativeName>
    <alternativeName>
        <fullName>Cytochrome P450C4H</fullName>
    </alternativeName>
</protein>
<gene>
    <name type="primary">CYP73A11</name>
</gene>
<organism>
    <name type="scientific">Glycine max</name>
    <name type="common">Soybean</name>
    <name type="synonym">Glycine hispida</name>
    <dbReference type="NCBI Taxonomy" id="3847"/>
    <lineage>
        <taxon>Eukaryota</taxon>
        <taxon>Viridiplantae</taxon>
        <taxon>Streptophyta</taxon>
        <taxon>Embryophyta</taxon>
        <taxon>Tracheophyta</taxon>
        <taxon>Spermatophyta</taxon>
        <taxon>Magnoliopsida</taxon>
        <taxon>eudicotyledons</taxon>
        <taxon>Gunneridae</taxon>
        <taxon>Pentapetalae</taxon>
        <taxon>rosids</taxon>
        <taxon>fabids</taxon>
        <taxon>Fabales</taxon>
        <taxon>Fabaceae</taxon>
        <taxon>Papilionoideae</taxon>
        <taxon>50 kb inversion clade</taxon>
        <taxon>NPAAA clade</taxon>
        <taxon>indigoferoid/millettioid clade</taxon>
        <taxon>Phaseoleae</taxon>
        <taxon>Glycine</taxon>
        <taxon>Glycine subgen. Soja</taxon>
    </lineage>
</organism>
<keyword id="KW-0349">Heme</keyword>
<keyword id="KW-0408">Iron</keyword>
<keyword id="KW-0472">Membrane</keyword>
<keyword id="KW-0479">Metal-binding</keyword>
<keyword id="KW-0503">Monooxygenase</keyword>
<keyword id="KW-0560">Oxidoreductase</keyword>
<keyword id="KW-1185">Reference proteome</keyword>
<keyword id="KW-0812">Transmembrane</keyword>
<keyword id="KW-1133">Transmembrane helix</keyword>
<name>TCMO_SOYBN</name>